<feature type="chain" id="PRO_0000360690" description="Putative ring-cleaving dioxygenase MhqO">
    <location>
        <begin position="1"/>
        <end position="312"/>
    </location>
</feature>
<feature type="domain" description="VOC 1" evidence="2">
    <location>
        <begin position="7"/>
        <end position="131"/>
    </location>
</feature>
<feature type="domain" description="VOC 2" evidence="2">
    <location>
        <begin position="152"/>
        <end position="269"/>
    </location>
</feature>
<feature type="binding site" evidence="1">
    <location>
        <position position="10"/>
    </location>
    <ligand>
        <name>Fe cation</name>
        <dbReference type="ChEBI" id="CHEBI:24875"/>
    </ligand>
</feature>
<feature type="binding site" evidence="1">
    <location>
        <position position="217"/>
    </location>
    <ligand>
        <name>Fe cation</name>
        <dbReference type="ChEBI" id="CHEBI:24875"/>
    </ligand>
</feature>
<feature type="binding site" evidence="1">
    <location>
        <position position="265"/>
    </location>
    <ligand>
        <name>Fe cation</name>
        <dbReference type="ChEBI" id="CHEBI:24875"/>
    </ligand>
</feature>
<feature type="strand" evidence="6">
    <location>
        <begin position="7"/>
        <end position="16"/>
    </location>
</feature>
<feature type="helix" evidence="6">
    <location>
        <begin position="18"/>
        <end position="25"/>
    </location>
</feature>
<feature type="turn" evidence="6">
    <location>
        <begin position="26"/>
        <end position="29"/>
    </location>
</feature>
<feature type="strand" evidence="6">
    <location>
        <begin position="32"/>
        <end position="38"/>
    </location>
</feature>
<feature type="strand" evidence="6">
    <location>
        <begin position="45"/>
        <end position="52"/>
    </location>
</feature>
<feature type="strand" evidence="6">
    <location>
        <begin position="59"/>
        <end position="65"/>
    </location>
</feature>
<feature type="strand" evidence="6">
    <location>
        <begin position="76"/>
        <end position="86"/>
    </location>
</feature>
<feature type="helix" evidence="6">
    <location>
        <begin position="91"/>
        <end position="100"/>
    </location>
</feature>
<feature type="strand" evidence="6">
    <location>
        <begin position="106"/>
        <end position="110"/>
    </location>
</feature>
<feature type="strand" evidence="6">
    <location>
        <begin position="113"/>
        <end position="119"/>
    </location>
</feature>
<feature type="strand" evidence="6">
    <location>
        <begin position="125"/>
        <end position="130"/>
    </location>
</feature>
<feature type="turn" evidence="6">
    <location>
        <begin position="146"/>
        <end position="148"/>
    </location>
</feature>
<feature type="strand" evidence="6">
    <location>
        <begin position="152"/>
        <end position="159"/>
    </location>
</feature>
<feature type="helix" evidence="6">
    <location>
        <begin position="163"/>
        <end position="172"/>
    </location>
</feature>
<feature type="strand" evidence="6">
    <location>
        <begin position="177"/>
        <end position="182"/>
    </location>
</feature>
<feature type="strand" evidence="6">
    <location>
        <begin position="185"/>
        <end position="189"/>
    </location>
</feature>
<feature type="strand" evidence="6">
    <location>
        <begin position="191"/>
        <end position="195"/>
    </location>
</feature>
<feature type="strand" evidence="6">
    <location>
        <begin position="197"/>
        <end position="203"/>
    </location>
</feature>
<feature type="strand" evidence="6">
    <location>
        <begin position="214"/>
        <end position="224"/>
    </location>
</feature>
<feature type="helix" evidence="6">
    <location>
        <begin position="225"/>
        <end position="237"/>
    </location>
</feature>
<feature type="strand" evidence="6">
    <location>
        <begin position="249"/>
        <end position="257"/>
    </location>
</feature>
<feature type="strand" evidence="6">
    <location>
        <begin position="263"/>
        <end position="269"/>
    </location>
</feature>
<feature type="strand" evidence="6">
    <location>
        <begin position="275"/>
        <end position="277"/>
    </location>
</feature>
<feature type="turn" evidence="6">
    <location>
        <begin position="279"/>
        <end position="283"/>
    </location>
</feature>
<feature type="strand" evidence="6">
    <location>
        <begin position="284"/>
        <end position="286"/>
    </location>
</feature>
<feature type="helix" evidence="6">
    <location>
        <begin position="290"/>
        <end position="295"/>
    </location>
</feature>
<feature type="helix" evidence="6">
    <location>
        <begin position="296"/>
        <end position="302"/>
    </location>
</feature>
<accession>P96693</accession>
<accession>Q797F9</accession>
<organism>
    <name type="scientific">Bacillus subtilis (strain 168)</name>
    <dbReference type="NCBI Taxonomy" id="224308"/>
    <lineage>
        <taxon>Bacteria</taxon>
        <taxon>Bacillati</taxon>
        <taxon>Bacillota</taxon>
        <taxon>Bacilli</taxon>
        <taxon>Bacillales</taxon>
        <taxon>Bacillaceae</taxon>
        <taxon>Bacillus</taxon>
    </lineage>
</organism>
<comment type="function">
    <text evidence="5">Putative ring-cleavage dioxygenase that may contribute to the degradation of aromatic compounds.</text>
</comment>
<comment type="cofactor">
    <cofactor evidence="5">
        <name>Fe(2+)</name>
        <dbReference type="ChEBI" id="CHEBI:29033"/>
    </cofactor>
    <text evidence="5">Binds 1 Fe(2+) ion.</text>
</comment>
<comment type="subcellular location">
    <subcellularLocation>
        <location evidence="3 4">Cytoplasm</location>
    </subcellularLocation>
</comment>
<comment type="induction">
    <text evidence="3 4">Repressed by MhqR. Strongly induced by stress due to exposure to 2-methylhydroquinone (2-MHQ) and less strongly induced after diamide or catechol stress. Not induced by oxidative stress due to hydrogen peroxide or methylglyoxal.</text>
</comment>
<comment type="similarity">
    <text evidence="5">Belongs to the extradiol ring-cleavage dioxygenase family.</text>
</comment>
<evidence type="ECO:0000255" key="1"/>
<evidence type="ECO:0000255" key="2">
    <source>
        <dbReference type="PROSITE-ProRule" id="PRU01163"/>
    </source>
</evidence>
<evidence type="ECO:0000269" key="3">
    <source>
    </source>
</evidence>
<evidence type="ECO:0000269" key="4">
    <source>
    </source>
</evidence>
<evidence type="ECO:0000305" key="5"/>
<evidence type="ECO:0007829" key="6">
    <source>
        <dbReference type="PDB" id="3OAJ"/>
    </source>
</evidence>
<reference key="1">
    <citation type="submission" date="1997-03" db="EMBL/GenBank/DDBJ databases">
        <title>A 148 kbp sequence of the region between 35 and 47 degree of the Bacillus subtilis genome.</title>
        <authorList>
            <person name="Kasahara Y."/>
            <person name="Nakai S."/>
            <person name="Lee S."/>
            <person name="Sadaie Y."/>
            <person name="Ogasawara N."/>
        </authorList>
    </citation>
    <scope>NUCLEOTIDE SEQUENCE [GENOMIC DNA]</scope>
    <source>
        <strain>168</strain>
    </source>
</reference>
<reference key="2">
    <citation type="journal article" date="1997" name="Nature">
        <title>The complete genome sequence of the Gram-positive bacterium Bacillus subtilis.</title>
        <authorList>
            <person name="Kunst F."/>
            <person name="Ogasawara N."/>
            <person name="Moszer I."/>
            <person name="Albertini A.M."/>
            <person name="Alloni G."/>
            <person name="Azevedo V."/>
            <person name="Bertero M.G."/>
            <person name="Bessieres P."/>
            <person name="Bolotin A."/>
            <person name="Borchert S."/>
            <person name="Borriss R."/>
            <person name="Boursier L."/>
            <person name="Brans A."/>
            <person name="Braun M."/>
            <person name="Brignell S.C."/>
            <person name="Bron S."/>
            <person name="Brouillet S."/>
            <person name="Bruschi C.V."/>
            <person name="Caldwell B."/>
            <person name="Capuano V."/>
            <person name="Carter N.M."/>
            <person name="Choi S.-K."/>
            <person name="Codani J.-J."/>
            <person name="Connerton I.F."/>
            <person name="Cummings N.J."/>
            <person name="Daniel R.A."/>
            <person name="Denizot F."/>
            <person name="Devine K.M."/>
            <person name="Duesterhoeft A."/>
            <person name="Ehrlich S.D."/>
            <person name="Emmerson P.T."/>
            <person name="Entian K.-D."/>
            <person name="Errington J."/>
            <person name="Fabret C."/>
            <person name="Ferrari E."/>
            <person name="Foulger D."/>
            <person name="Fritz C."/>
            <person name="Fujita M."/>
            <person name="Fujita Y."/>
            <person name="Fuma S."/>
            <person name="Galizzi A."/>
            <person name="Galleron N."/>
            <person name="Ghim S.-Y."/>
            <person name="Glaser P."/>
            <person name="Goffeau A."/>
            <person name="Golightly E.J."/>
            <person name="Grandi G."/>
            <person name="Guiseppi G."/>
            <person name="Guy B.J."/>
            <person name="Haga K."/>
            <person name="Haiech J."/>
            <person name="Harwood C.R."/>
            <person name="Henaut A."/>
            <person name="Hilbert H."/>
            <person name="Holsappel S."/>
            <person name="Hosono S."/>
            <person name="Hullo M.-F."/>
            <person name="Itaya M."/>
            <person name="Jones L.-M."/>
            <person name="Joris B."/>
            <person name="Karamata D."/>
            <person name="Kasahara Y."/>
            <person name="Klaerr-Blanchard M."/>
            <person name="Klein C."/>
            <person name="Kobayashi Y."/>
            <person name="Koetter P."/>
            <person name="Koningstein G."/>
            <person name="Krogh S."/>
            <person name="Kumano M."/>
            <person name="Kurita K."/>
            <person name="Lapidus A."/>
            <person name="Lardinois S."/>
            <person name="Lauber J."/>
            <person name="Lazarevic V."/>
            <person name="Lee S.-M."/>
            <person name="Levine A."/>
            <person name="Liu H."/>
            <person name="Masuda S."/>
            <person name="Mauel C."/>
            <person name="Medigue C."/>
            <person name="Medina N."/>
            <person name="Mellado R.P."/>
            <person name="Mizuno M."/>
            <person name="Moestl D."/>
            <person name="Nakai S."/>
            <person name="Noback M."/>
            <person name="Noone D."/>
            <person name="O'Reilly M."/>
            <person name="Ogawa K."/>
            <person name="Ogiwara A."/>
            <person name="Oudega B."/>
            <person name="Park S.-H."/>
            <person name="Parro V."/>
            <person name="Pohl T.M."/>
            <person name="Portetelle D."/>
            <person name="Porwollik S."/>
            <person name="Prescott A.M."/>
            <person name="Presecan E."/>
            <person name="Pujic P."/>
            <person name="Purnelle B."/>
            <person name="Rapoport G."/>
            <person name="Rey M."/>
            <person name="Reynolds S."/>
            <person name="Rieger M."/>
            <person name="Rivolta C."/>
            <person name="Rocha E."/>
            <person name="Roche B."/>
            <person name="Rose M."/>
            <person name="Sadaie Y."/>
            <person name="Sato T."/>
            <person name="Scanlan E."/>
            <person name="Schleich S."/>
            <person name="Schroeter R."/>
            <person name="Scoffone F."/>
            <person name="Sekiguchi J."/>
            <person name="Sekowska A."/>
            <person name="Seror S.J."/>
            <person name="Serror P."/>
            <person name="Shin B.-S."/>
            <person name="Soldo B."/>
            <person name="Sorokin A."/>
            <person name="Tacconi E."/>
            <person name="Takagi T."/>
            <person name="Takahashi H."/>
            <person name="Takemaru K."/>
            <person name="Takeuchi M."/>
            <person name="Tamakoshi A."/>
            <person name="Tanaka T."/>
            <person name="Terpstra P."/>
            <person name="Tognoni A."/>
            <person name="Tosato V."/>
            <person name="Uchiyama S."/>
            <person name="Vandenbol M."/>
            <person name="Vannier F."/>
            <person name="Vassarotti A."/>
            <person name="Viari A."/>
            <person name="Wambutt R."/>
            <person name="Wedler E."/>
            <person name="Wedler H."/>
            <person name="Weitzenegger T."/>
            <person name="Winters P."/>
            <person name="Wipat A."/>
            <person name="Yamamoto H."/>
            <person name="Yamane K."/>
            <person name="Yasumoto K."/>
            <person name="Yata K."/>
            <person name="Yoshida K."/>
            <person name="Yoshikawa H.-F."/>
            <person name="Zumstein E."/>
            <person name="Yoshikawa H."/>
            <person name="Danchin A."/>
        </authorList>
    </citation>
    <scope>NUCLEOTIDE SEQUENCE [LARGE SCALE GENOMIC DNA]</scope>
    <source>
        <strain>168</strain>
    </source>
</reference>
<reference key="3">
    <citation type="journal article" date="2007" name="Mol. Microbiol.">
        <title>The MarR-type repressor MhqR (YkvE) regulates multiple dioxygenases/glyoxalases and an azoreductase which confer resistance to 2-methylhydroquinone and catechol in Bacillus subtilis.</title>
        <authorList>
            <person name="Toewe S."/>
            <person name="Leelakriangsak M."/>
            <person name="Kobayashi K."/>
            <person name="Van Duy N."/>
            <person name="Hecker M."/>
            <person name="Zuber P."/>
            <person name="Antelmann H."/>
        </authorList>
    </citation>
    <scope>INDUCTION</scope>
    <scope>SUBCELLULAR LOCATION</scope>
    <source>
        <strain>168</strain>
    </source>
</reference>
<reference key="4">
    <citation type="journal article" date="2007" name="Proteomics">
        <title>Transcriptome and proteome analyses in response to 2-methylhydroquinone and 6-brom-2-vinyl-chroman-4-on reveal different degradation systems involved in the catabolism of aromatic compounds in Bacillus subtilis.</title>
        <authorList>
            <person name="Nguyen V.D."/>
            <person name="Wolf C."/>
            <person name="Maeder U."/>
            <person name="Lalk M."/>
            <person name="Langer P."/>
            <person name="Lindequist U."/>
            <person name="Hecker M."/>
            <person name="Antelmann H."/>
        </authorList>
    </citation>
    <scope>INDUCTION</scope>
    <scope>IDENTIFICATION OF THE YDFNOP OPERON</scope>
    <scope>SUBCELLULAR LOCATION</scope>
    <scope>NOMENCLATURE</scope>
    <source>
        <strain>168</strain>
    </source>
</reference>
<keyword id="KW-0002">3D-structure</keyword>
<keyword id="KW-0058">Aromatic hydrocarbons catabolism</keyword>
<keyword id="KW-0963">Cytoplasm</keyword>
<keyword id="KW-0216">Detoxification</keyword>
<keyword id="KW-0223">Dioxygenase</keyword>
<keyword id="KW-0408">Iron</keyword>
<keyword id="KW-0479">Metal-binding</keyword>
<keyword id="KW-0560">Oxidoreductase</keyword>
<keyword id="KW-1185">Reference proteome</keyword>
<keyword id="KW-0677">Repeat</keyword>
<name>MHQO_BACSU</name>
<dbReference type="EC" id="1.13.11.-"/>
<dbReference type="EMBL" id="AB001488">
    <property type="protein sequence ID" value="BAA19383.1"/>
    <property type="molecule type" value="Genomic_DNA"/>
</dbReference>
<dbReference type="EMBL" id="AL009126">
    <property type="protein sequence ID" value="CAB12356.1"/>
    <property type="molecule type" value="Genomic_DNA"/>
</dbReference>
<dbReference type="PIR" id="E69781">
    <property type="entry name" value="E69781"/>
</dbReference>
<dbReference type="RefSeq" id="NP_388430.1">
    <property type="nucleotide sequence ID" value="NC_000964.3"/>
</dbReference>
<dbReference type="RefSeq" id="WP_003234172.1">
    <property type="nucleotide sequence ID" value="NZ_OZ025638.1"/>
</dbReference>
<dbReference type="PDB" id="3OAJ">
    <property type="method" value="X-ray"/>
    <property type="resolution" value="1.40 A"/>
    <property type="chains" value="A/B=1-312"/>
</dbReference>
<dbReference type="PDBsum" id="3OAJ"/>
<dbReference type="SMR" id="P96693"/>
<dbReference type="FunCoup" id="P96693">
    <property type="interactions" value="20"/>
</dbReference>
<dbReference type="STRING" id="224308.BSU05490"/>
<dbReference type="PaxDb" id="224308-BSU05490"/>
<dbReference type="EnsemblBacteria" id="CAB12356">
    <property type="protein sequence ID" value="CAB12356"/>
    <property type="gene ID" value="BSU_05490"/>
</dbReference>
<dbReference type="GeneID" id="939894"/>
<dbReference type="KEGG" id="bsu:BSU05490"/>
<dbReference type="PATRIC" id="fig|224308.179.peg.589"/>
<dbReference type="eggNOG" id="COG0346">
    <property type="taxonomic scope" value="Bacteria"/>
</dbReference>
<dbReference type="InParanoid" id="P96693"/>
<dbReference type="OrthoDB" id="9785698at2"/>
<dbReference type="PhylomeDB" id="P96693"/>
<dbReference type="BioCyc" id="BSUB:BSU05490-MONOMER"/>
<dbReference type="EvolutionaryTrace" id="P96693"/>
<dbReference type="Proteomes" id="UP000001570">
    <property type="component" value="Chromosome"/>
</dbReference>
<dbReference type="GO" id="GO:0005737">
    <property type="term" value="C:cytoplasm"/>
    <property type="evidence" value="ECO:0007669"/>
    <property type="project" value="UniProtKB-SubCell"/>
</dbReference>
<dbReference type="GO" id="GO:0051213">
    <property type="term" value="F:dioxygenase activity"/>
    <property type="evidence" value="ECO:0007669"/>
    <property type="project" value="UniProtKB-KW"/>
</dbReference>
<dbReference type="GO" id="GO:0046872">
    <property type="term" value="F:metal ion binding"/>
    <property type="evidence" value="ECO:0007669"/>
    <property type="project" value="UniProtKB-KW"/>
</dbReference>
<dbReference type="GO" id="GO:0009056">
    <property type="term" value="P:catabolic process"/>
    <property type="evidence" value="ECO:0007669"/>
    <property type="project" value="UniProtKB-KW"/>
</dbReference>
<dbReference type="GO" id="GO:0009636">
    <property type="term" value="P:response to toxic substance"/>
    <property type="evidence" value="ECO:0007669"/>
    <property type="project" value="UniProtKB-KW"/>
</dbReference>
<dbReference type="CDD" id="cd08347">
    <property type="entry name" value="PcpA_C_like"/>
    <property type="match status" value="1"/>
</dbReference>
<dbReference type="CDD" id="cd08346">
    <property type="entry name" value="PcpA_N_like"/>
    <property type="match status" value="1"/>
</dbReference>
<dbReference type="Gene3D" id="3.10.180.10">
    <property type="entry name" value="2,3-Dihydroxybiphenyl 1,2-Dioxygenase, domain 1"/>
    <property type="match status" value="2"/>
</dbReference>
<dbReference type="InterPro" id="IPR052537">
    <property type="entry name" value="Extradiol_RC_dioxygenase"/>
</dbReference>
<dbReference type="InterPro" id="IPR029068">
    <property type="entry name" value="Glyas_Bleomycin-R_OHBP_Dase"/>
</dbReference>
<dbReference type="InterPro" id="IPR004360">
    <property type="entry name" value="Glyas_Fos-R_dOase_dom"/>
</dbReference>
<dbReference type="InterPro" id="IPR037523">
    <property type="entry name" value="VOC"/>
</dbReference>
<dbReference type="PANTHER" id="PTHR36110">
    <property type="entry name" value="RING-CLEAVING DIOXYGENASE MHQE-RELATED"/>
    <property type="match status" value="1"/>
</dbReference>
<dbReference type="PANTHER" id="PTHR36110:SF2">
    <property type="entry name" value="RING-CLEAVING DIOXYGENASE MHQE-RELATED"/>
    <property type="match status" value="1"/>
</dbReference>
<dbReference type="Pfam" id="PF00903">
    <property type="entry name" value="Glyoxalase"/>
    <property type="match status" value="2"/>
</dbReference>
<dbReference type="SUPFAM" id="SSF54593">
    <property type="entry name" value="Glyoxalase/Bleomycin resistance protein/Dihydroxybiphenyl dioxygenase"/>
    <property type="match status" value="1"/>
</dbReference>
<dbReference type="PROSITE" id="PS51819">
    <property type="entry name" value="VOC"/>
    <property type="match status" value="2"/>
</dbReference>
<sequence>MAKKTMGIHHITAIVGHPQENTDFYAGVLGLRLVKQTVNFDDPGTYHLYFGNEGGKPGTIITFFPWAGARQGVIGDGQVGVTSYVVPKGAMAFWEKRLEKFNVPYTKIERFGEQYVEFDDPHGLHLEIVEREEGEANTWTFGEVTPDVAIKGFGGATLLSEQPDKTADLLENIMGLERVGKEGDFVRYRSAGDIGNVIDLKLTPIGRGQMGAGTVHHIAWRANDDEDQLDWQRYIASHGYGVTPVRDRNYFNAIYFREHGEILFEIATDPPGFAHDETQETMGEKLMLPVQYEPHRTQIEQGLLPFEVRELD</sequence>
<gene>
    <name type="primary">mhqO</name>
    <name type="synonym">ydfO</name>
    <name type="ordered locus">BSU05490</name>
</gene>
<protein>
    <recommendedName>
        <fullName>Putative ring-cleaving dioxygenase MhqO</fullName>
        <ecNumber>1.13.11.-</ecNumber>
    </recommendedName>
</protein>
<proteinExistence type="evidence at protein level"/>